<keyword id="KW-0067">ATP-binding</keyword>
<keyword id="KW-0173">Coenzyme A biosynthesis</keyword>
<keyword id="KW-0963">Cytoplasm</keyword>
<keyword id="KW-0460">Magnesium</keyword>
<keyword id="KW-0547">Nucleotide-binding</keyword>
<keyword id="KW-0548">Nucleotidyltransferase</keyword>
<keyword id="KW-0808">Transferase</keyword>
<feature type="chain" id="PRO_1000011219" description="Phosphopantetheine adenylyltransferase">
    <location>
        <begin position="1"/>
        <end position="165"/>
    </location>
</feature>
<feature type="binding site" evidence="1">
    <location>
        <begin position="10"/>
        <end position="11"/>
    </location>
    <ligand>
        <name>ATP</name>
        <dbReference type="ChEBI" id="CHEBI:30616"/>
    </ligand>
</feature>
<feature type="binding site" evidence="1">
    <location>
        <position position="10"/>
    </location>
    <ligand>
        <name>substrate</name>
    </ligand>
</feature>
<feature type="binding site" evidence="1">
    <location>
        <position position="18"/>
    </location>
    <ligand>
        <name>ATP</name>
        <dbReference type="ChEBI" id="CHEBI:30616"/>
    </ligand>
</feature>
<feature type="binding site" evidence="1">
    <location>
        <position position="42"/>
    </location>
    <ligand>
        <name>substrate</name>
    </ligand>
</feature>
<feature type="binding site" evidence="1">
    <location>
        <position position="79"/>
    </location>
    <ligand>
        <name>substrate</name>
    </ligand>
</feature>
<feature type="binding site" evidence="1">
    <location>
        <position position="93"/>
    </location>
    <ligand>
        <name>substrate</name>
    </ligand>
</feature>
<feature type="binding site" evidence="1">
    <location>
        <begin position="94"/>
        <end position="96"/>
    </location>
    <ligand>
        <name>ATP</name>
        <dbReference type="ChEBI" id="CHEBI:30616"/>
    </ligand>
</feature>
<feature type="binding site" evidence="1">
    <location>
        <position position="104"/>
    </location>
    <ligand>
        <name>ATP</name>
        <dbReference type="ChEBI" id="CHEBI:30616"/>
    </ligand>
</feature>
<feature type="binding site" evidence="1">
    <location>
        <begin position="129"/>
        <end position="135"/>
    </location>
    <ligand>
        <name>ATP</name>
        <dbReference type="ChEBI" id="CHEBI:30616"/>
    </ligand>
</feature>
<feature type="site" description="Transition state stabilizer" evidence="1">
    <location>
        <position position="18"/>
    </location>
</feature>
<protein>
    <recommendedName>
        <fullName evidence="1">Phosphopantetheine adenylyltransferase</fullName>
        <ecNumber evidence="1">2.7.7.3</ecNumber>
    </recommendedName>
    <alternativeName>
        <fullName evidence="1">Dephospho-CoA pyrophosphorylase</fullName>
    </alternativeName>
    <alternativeName>
        <fullName evidence="1">Pantetheine-phosphate adenylyltransferase</fullName>
        <shortName evidence="1">PPAT</shortName>
    </alternativeName>
</protein>
<name>COAD_RHOP5</name>
<reference key="1">
    <citation type="submission" date="2006-09" db="EMBL/GenBank/DDBJ databases">
        <title>Complete sequence of Rhodopseudomonas palustris BisA53.</title>
        <authorList>
            <consortium name="US DOE Joint Genome Institute"/>
            <person name="Copeland A."/>
            <person name="Lucas S."/>
            <person name="Lapidus A."/>
            <person name="Barry K."/>
            <person name="Detter J.C."/>
            <person name="Glavina del Rio T."/>
            <person name="Hammon N."/>
            <person name="Israni S."/>
            <person name="Dalin E."/>
            <person name="Tice H."/>
            <person name="Pitluck S."/>
            <person name="Chain P."/>
            <person name="Malfatti S."/>
            <person name="Shin M."/>
            <person name="Vergez L."/>
            <person name="Schmutz J."/>
            <person name="Larimer F."/>
            <person name="Land M."/>
            <person name="Hauser L."/>
            <person name="Pelletier D.A."/>
            <person name="Kyrpides N."/>
            <person name="Kim E."/>
            <person name="Harwood C.S."/>
            <person name="Oda Y."/>
            <person name="Richardson P."/>
        </authorList>
    </citation>
    <scope>NUCLEOTIDE SEQUENCE [LARGE SCALE GENOMIC DNA]</scope>
    <source>
        <strain>BisA53</strain>
    </source>
</reference>
<dbReference type="EC" id="2.7.7.3" evidence="1"/>
<dbReference type="EMBL" id="CP000463">
    <property type="protein sequence ID" value="ABJ06703.1"/>
    <property type="molecule type" value="Genomic_DNA"/>
</dbReference>
<dbReference type="SMR" id="Q07MY1"/>
<dbReference type="STRING" id="316055.RPE_2766"/>
<dbReference type="KEGG" id="rpe:RPE_2766"/>
<dbReference type="eggNOG" id="COG0669">
    <property type="taxonomic scope" value="Bacteria"/>
</dbReference>
<dbReference type="HOGENOM" id="CLU_100149_0_1_5"/>
<dbReference type="OrthoDB" id="9806661at2"/>
<dbReference type="UniPathway" id="UPA00241">
    <property type="reaction ID" value="UER00355"/>
</dbReference>
<dbReference type="GO" id="GO:0005737">
    <property type="term" value="C:cytoplasm"/>
    <property type="evidence" value="ECO:0007669"/>
    <property type="project" value="UniProtKB-SubCell"/>
</dbReference>
<dbReference type="GO" id="GO:0005524">
    <property type="term" value="F:ATP binding"/>
    <property type="evidence" value="ECO:0007669"/>
    <property type="project" value="UniProtKB-KW"/>
</dbReference>
<dbReference type="GO" id="GO:0004595">
    <property type="term" value="F:pantetheine-phosphate adenylyltransferase activity"/>
    <property type="evidence" value="ECO:0007669"/>
    <property type="project" value="UniProtKB-UniRule"/>
</dbReference>
<dbReference type="GO" id="GO:0015937">
    <property type="term" value="P:coenzyme A biosynthetic process"/>
    <property type="evidence" value="ECO:0007669"/>
    <property type="project" value="UniProtKB-UniRule"/>
</dbReference>
<dbReference type="CDD" id="cd02163">
    <property type="entry name" value="PPAT"/>
    <property type="match status" value="1"/>
</dbReference>
<dbReference type="Gene3D" id="3.40.50.620">
    <property type="entry name" value="HUPs"/>
    <property type="match status" value="1"/>
</dbReference>
<dbReference type="HAMAP" id="MF_00151">
    <property type="entry name" value="PPAT_bact"/>
    <property type="match status" value="1"/>
</dbReference>
<dbReference type="InterPro" id="IPR004821">
    <property type="entry name" value="Cyt_trans-like"/>
</dbReference>
<dbReference type="InterPro" id="IPR001980">
    <property type="entry name" value="PPAT"/>
</dbReference>
<dbReference type="InterPro" id="IPR014729">
    <property type="entry name" value="Rossmann-like_a/b/a_fold"/>
</dbReference>
<dbReference type="NCBIfam" id="TIGR01510">
    <property type="entry name" value="coaD_prev_kdtB"/>
    <property type="match status" value="1"/>
</dbReference>
<dbReference type="NCBIfam" id="TIGR00125">
    <property type="entry name" value="cyt_tran_rel"/>
    <property type="match status" value="1"/>
</dbReference>
<dbReference type="PANTHER" id="PTHR21342">
    <property type="entry name" value="PHOSPHOPANTETHEINE ADENYLYLTRANSFERASE"/>
    <property type="match status" value="1"/>
</dbReference>
<dbReference type="PANTHER" id="PTHR21342:SF1">
    <property type="entry name" value="PHOSPHOPANTETHEINE ADENYLYLTRANSFERASE"/>
    <property type="match status" value="1"/>
</dbReference>
<dbReference type="Pfam" id="PF01467">
    <property type="entry name" value="CTP_transf_like"/>
    <property type="match status" value="1"/>
</dbReference>
<dbReference type="PRINTS" id="PR01020">
    <property type="entry name" value="LPSBIOSNTHSS"/>
</dbReference>
<dbReference type="SUPFAM" id="SSF52374">
    <property type="entry name" value="Nucleotidylyl transferase"/>
    <property type="match status" value="1"/>
</dbReference>
<gene>
    <name evidence="1" type="primary">coaD</name>
    <name type="ordered locus">RPE_2766</name>
</gene>
<accession>Q07MY1</accession>
<evidence type="ECO:0000255" key="1">
    <source>
        <dbReference type="HAMAP-Rule" id="MF_00151"/>
    </source>
</evidence>
<sequence length="165" mass="17492">MPRIALYPGSFDPVTNGHLDVVRRAVTLCDRLIVAIGVHPGKKPLFSTEERLAMVRDVFGPIAAEAGCAFDCTTYDNLTITAAQQAGATIMVRGLRDGTDLDYEMQIAGMNETMAPTVQTVFVPASVAVRPITATLVRQIAAMGGDVSAFVPPQVAALLKTKFAG</sequence>
<proteinExistence type="inferred from homology"/>
<comment type="function">
    <text evidence="1">Reversibly transfers an adenylyl group from ATP to 4'-phosphopantetheine, yielding dephospho-CoA (dPCoA) and pyrophosphate.</text>
</comment>
<comment type="catalytic activity">
    <reaction evidence="1">
        <text>(R)-4'-phosphopantetheine + ATP + H(+) = 3'-dephospho-CoA + diphosphate</text>
        <dbReference type="Rhea" id="RHEA:19801"/>
        <dbReference type="ChEBI" id="CHEBI:15378"/>
        <dbReference type="ChEBI" id="CHEBI:30616"/>
        <dbReference type="ChEBI" id="CHEBI:33019"/>
        <dbReference type="ChEBI" id="CHEBI:57328"/>
        <dbReference type="ChEBI" id="CHEBI:61723"/>
        <dbReference type="EC" id="2.7.7.3"/>
    </reaction>
</comment>
<comment type="cofactor">
    <cofactor evidence="1">
        <name>Mg(2+)</name>
        <dbReference type="ChEBI" id="CHEBI:18420"/>
    </cofactor>
</comment>
<comment type="pathway">
    <text evidence="1">Cofactor biosynthesis; coenzyme A biosynthesis; CoA from (R)-pantothenate: step 4/5.</text>
</comment>
<comment type="subunit">
    <text evidence="1">Homohexamer.</text>
</comment>
<comment type="subcellular location">
    <subcellularLocation>
        <location evidence="1">Cytoplasm</location>
    </subcellularLocation>
</comment>
<comment type="similarity">
    <text evidence="1">Belongs to the bacterial CoaD family.</text>
</comment>
<organism>
    <name type="scientific">Rhodopseudomonas palustris (strain BisA53)</name>
    <dbReference type="NCBI Taxonomy" id="316055"/>
    <lineage>
        <taxon>Bacteria</taxon>
        <taxon>Pseudomonadati</taxon>
        <taxon>Pseudomonadota</taxon>
        <taxon>Alphaproteobacteria</taxon>
        <taxon>Hyphomicrobiales</taxon>
        <taxon>Nitrobacteraceae</taxon>
        <taxon>Rhodopseudomonas</taxon>
    </lineage>
</organism>